<name>RODZ_YERPA</name>
<gene>
    <name evidence="1" type="primary">rodZ</name>
    <name type="ordered locus">YPA_2320</name>
</gene>
<comment type="function">
    <text evidence="1">Cytoskeletal protein that is involved in cell-shape control through regulation of the length of the long axis.</text>
</comment>
<comment type="subcellular location">
    <subcellularLocation>
        <location evidence="1">Cell inner membrane</location>
        <topology evidence="1">Single-pass type II membrane protein</topology>
    </subcellularLocation>
    <text evidence="1">Forms helical filaments along the long axis of the cell.</text>
</comment>
<comment type="domain">
    <text evidence="1">The helix-turn-helix (HTH) motif in the cytoplasmic domain of the N-terminus is involved in the formation of spirals to maintain the rigid rod shape. As this protein is anchored in the cytoplasmic membrane, the HTH motif may contribute to protein-protein interactions to form the RodZ helix, which is localized beneath the cytoplasmic membrane. The C-terminal domain may be critical for determination of the rod shape by probably interacting with enzymes required for synthesis of the peptidoglycan layer, including PBPs in the periplasm.</text>
</comment>
<comment type="similarity">
    <text evidence="1">Belongs to the RodZ family.</text>
</comment>
<organism>
    <name type="scientific">Yersinia pestis bv. Antiqua (strain Antiqua)</name>
    <dbReference type="NCBI Taxonomy" id="360102"/>
    <lineage>
        <taxon>Bacteria</taxon>
        <taxon>Pseudomonadati</taxon>
        <taxon>Pseudomonadota</taxon>
        <taxon>Gammaproteobacteria</taxon>
        <taxon>Enterobacterales</taxon>
        <taxon>Yersiniaceae</taxon>
        <taxon>Yersinia</taxon>
    </lineage>
</organism>
<reference key="1">
    <citation type="journal article" date="2006" name="J. Bacteriol.">
        <title>Complete genome sequence of Yersinia pestis strains Antiqua and Nepal516: evidence of gene reduction in an emerging pathogen.</title>
        <authorList>
            <person name="Chain P.S.G."/>
            <person name="Hu P."/>
            <person name="Malfatti S.A."/>
            <person name="Radnedge L."/>
            <person name="Larimer F."/>
            <person name="Vergez L.M."/>
            <person name="Worsham P."/>
            <person name="Chu M.C."/>
            <person name="Andersen G.L."/>
        </authorList>
    </citation>
    <scope>NUCLEOTIDE SEQUENCE [LARGE SCALE GENOMIC DNA]</scope>
    <source>
        <strain>Antiqua</strain>
    </source>
</reference>
<feature type="chain" id="PRO_0000361872" description="Cytoskeleton protein RodZ">
    <location>
        <begin position="1"/>
        <end position="345"/>
    </location>
</feature>
<feature type="topological domain" description="Cytoplasmic" evidence="1">
    <location>
        <begin position="1"/>
        <end position="111"/>
    </location>
</feature>
<feature type="transmembrane region" description="Helical; Signal-anchor for type II membrane protein" evidence="1">
    <location>
        <begin position="112"/>
        <end position="132"/>
    </location>
</feature>
<feature type="topological domain" description="Periplasmic" evidence="1">
    <location>
        <begin position="133"/>
        <end position="345"/>
    </location>
</feature>
<feature type="domain" description="HTH cro/C1-type" evidence="1">
    <location>
        <begin position="19"/>
        <end position="79"/>
    </location>
</feature>
<feature type="DNA-binding region" description="H-T-H motif" evidence="1">
    <location>
        <begin position="30"/>
        <end position="49"/>
    </location>
</feature>
<feature type="region of interest" description="Disordered" evidence="2">
    <location>
        <begin position="151"/>
        <end position="259"/>
    </location>
</feature>
<feature type="compositionally biased region" description="Polar residues" evidence="2">
    <location>
        <begin position="188"/>
        <end position="225"/>
    </location>
</feature>
<feature type="compositionally biased region" description="Low complexity" evidence="2">
    <location>
        <begin position="229"/>
        <end position="241"/>
    </location>
</feature>
<protein>
    <recommendedName>
        <fullName evidence="1">Cytoskeleton protein RodZ</fullName>
    </recommendedName>
</protein>
<dbReference type="EMBL" id="CP000308">
    <property type="protein sequence ID" value="ABG14285.1"/>
    <property type="molecule type" value="Genomic_DNA"/>
</dbReference>
<dbReference type="RefSeq" id="WP_002209818.1">
    <property type="nucleotide sequence ID" value="NZ_CP009906.1"/>
</dbReference>
<dbReference type="SMR" id="Q1C5I7"/>
<dbReference type="GeneID" id="57975838"/>
<dbReference type="KEGG" id="ypa:YPA_2320"/>
<dbReference type="Proteomes" id="UP000001971">
    <property type="component" value="Chromosome"/>
</dbReference>
<dbReference type="GO" id="GO:0005886">
    <property type="term" value="C:plasma membrane"/>
    <property type="evidence" value="ECO:0007669"/>
    <property type="project" value="UniProtKB-SubCell"/>
</dbReference>
<dbReference type="GO" id="GO:0003677">
    <property type="term" value="F:DNA binding"/>
    <property type="evidence" value="ECO:0007669"/>
    <property type="project" value="UniProtKB-KW"/>
</dbReference>
<dbReference type="GO" id="GO:0008360">
    <property type="term" value="P:regulation of cell shape"/>
    <property type="evidence" value="ECO:0007669"/>
    <property type="project" value="UniProtKB-UniRule"/>
</dbReference>
<dbReference type="CDD" id="cd00093">
    <property type="entry name" value="HTH_XRE"/>
    <property type="match status" value="1"/>
</dbReference>
<dbReference type="Gene3D" id="1.10.260.40">
    <property type="entry name" value="lambda repressor-like DNA-binding domains"/>
    <property type="match status" value="1"/>
</dbReference>
<dbReference type="HAMAP" id="MF_02017">
    <property type="entry name" value="RodZ"/>
    <property type="match status" value="1"/>
</dbReference>
<dbReference type="InterPro" id="IPR050400">
    <property type="entry name" value="Bact_Cytoskel_RodZ"/>
</dbReference>
<dbReference type="InterPro" id="IPR001387">
    <property type="entry name" value="Cro/C1-type_HTH"/>
</dbReference>
<dbReference type="InterPro" id="IPR010982">
    <property type="entry name" value="Lambda_DNA-bd_dom_sf"/>
</dbReference>
<dbReference type="InterPro" id="IPR023690">
    <property type="entry name" value="RodZ"/>
</dbReference>
<dbReference type="InterPro" id="IPR025194">
    <property type="entry name" value="RodZ-like_C"/>
</dbReference>
<dbReference type="NCBIfam" id="NF008109">
    <property type="entry name" value="PRK10856.1"/>
    <property type="match status" value="1"/>
</dbReference>
<dbReference type="PANTHER" id="PTHR34475">
    <property type="match status" value="1"/>
</dbReference>
<dbReference type="PANTHER" id="PTHR34475:SF1">
    <property type="entry name" value="CYTOSKELETON PROTEIN RODZ"/>
    <property type="match status" value="1"/>
</dbReference>
<dbReference type="Pfam" id="PF13413">
    <property type="entry name" value="HTH_25"/>
    <property type="match status" value="1"/>
</dbReference>
<dbReference type="Pfam" id="PF13464">
    <property type="entry name" value="RodZ_C"/>
    <property type="match status" value="1"/>
</dbReference>
<dbReference type="SMART" id="SM00530">
    <property type="entry name" value="HTH_XRE"/>
    <property type="match status" value="1"/>
</dbReference>
<dbReference type="SUPFAM" id="SSF47413">
    <property type="entry name" value="lambda repressor-like DNA-binding domains"/>
    <property type="match status" value="1"/>
</dbReference>
<dbReference type="PROSITE" id="PS50943">
    <property type="entry name" value="HTH_CROC1"/>
    <property type="match status" value="1"/>
</dbReference>
<accession>Q1C5I7</accession>
<keyword id="KW-0997">Cell inner membrane</keyword>
<keyword id="KW-1003">Cell membrane</keyword>
<keyword id="KW-0133">Cell shape</keyword>
<keyword id="KW-0238">DNA-binding</keyword>
<keyword id="KW-0472">Membrane</keyword>
<keyword id="KW-0735">Signal-anchor</keyword>
<keyword id="KW-0812">Transmembrane</keyword>
<keyword id="KW-1133">Transmembrane helix</keyword>
<evidence type="ECO:0000255" key="1">
    <source>
        <dbReference type="HAMAP-Rule" id="MF_02017"/>
    </source>
</evidence>
<evidence type="ECO:0000256" key="2">
    <source>
        <dbReference type="SAM" id="MobiDB-lite"/>
    </source>
</evidence>
<proteinExistence type="inferred from homology"/>
<sequence>MNTEASQDQTVTETPGVRLRQARESLGLTQQTVAERLCLKVSTIRDIEEDNAQANLASTFHRGYIRSYAKLVHLPEDELLPILEKQAPVRAAKVAPMQSFSLGKKHKKRDGWLMSFTWLIVLVVLGLTGAWWWQNHQAQQAEIANMVDQSSAQLSQNGGQPVPLTDDNSDAIAPTDAPAPVANGQPVPLTNHSGSAITNSATTSSVPKTTSTEPVDTANTNTTMHQEGAASAAVSPSQVPQPGMPTGQPPLPTADAGVSGSASSVGALVMNFTADCWLQVVDATGKTLFSGIQKGGAVLNLAGKAPYKLTIGAPGALTISYQGNPVDLSKFIKANRVARLTVCVE</sequence>